<comment type="function">
    <text evidence="1 2">Has both glyceraldehyde-3-phosphate dehydrogenase and nitrosylase activities, thereby playing a role in glycolysis and nuclear functions, respectively. Glyceraldehyde-3-phosphate dehydrogenase is a key enzyme in glycolysis that catalyzes the first step of the pathway by converting D-glyceraldehyde 3-phosphate (G3P) into 3-phospho-D-glyceroyl phosphate (By similarity). Participates in nuclear events including transcription, RNA transport, DNA replication and apoptosis. Nuclear functions are probably due to the nitrosylase activity that mediates cysteine S-nitrosylation of nuclear target proteins such as SIRT1, HDAC2 and PRKDC (By similarity).</text>
</comment>
<comment type="catalytic activity">
    <reaction evidence="1 4">
        <text>D-glyceraldehyde 3-phosphate + phosphate + NAD(+) = (2R)-3-phospho-glyceroyl phosphate + NADH + H(+)</text>
        <dbReference type="Rhea" id="RHEA:10300"/>
        <dbReference type="ChEBI" id="CHEBI:15378"/>
        <dbReference type="ChEBI" id="CHEBI:43474"/>
        <dbReference type="ChEBI" id="CHEBI:57540"/>
        <dbReference type="ChEBI" id="CHEBI:57604"/>
        <dbReference type="ChEBI" id="CHEBI:57945"/>
        <dbReference type="ChEBI" id="CHEBI:59776"/>
        <dbReference type="EC" id="1.2.1.12"/>
    </reaction>
</comment>
<comment type="catalytic activity">
    <reaction evidence="2">
        <text>S-nitroso-L-cysteinyl-[GAPDH] + L-cysteinyl-[protein] = L-cysteinyl-[GAPDH] + S-nitroso-L-cysteinyl-[protein]</text>
        <dbReference type="Rhea" id="RHEA:66684"/>
        <dbReference type="Rhea" id="RHEA-COMP:10131"/>
        <dbReference type="Rhea" id="RHEA-COMP:17089"/>
        <dbReference type="Rhea" id="RHEA-COMP:17090"/>
        <dbReference type="Rhea" id="RHEA-COMP:17091"/>
        <dbReference type="ChEBI" id="CHEBI:29950"/>
        <dbReference type="ChEBI" id="CHEBI:149494"/>
    </reaction>
    <physiologicalReaction direction="left-to-right" evidence="2">
        <dbReference type="Rhea" id="RHEA:66685"/>
    </physiologicalReaction>
</comment>
<comment type="pathway">
    <text>Carbohydrate degradation; glycolysis; pyruvate from D-glyceraldehyde 3-phosphate: step 1/5.</text>
</comment>
<comment type="subunit">
    <text evidence="1">Homotetramer.</text>
</comment>
<comment type="subcellular location">
    <subcellularLocation>
        <location evidence="2">Cytoplasm</location>
        <location evidence="2">Cytosol</location>
    </subcellularLocation>
    <subcellularLocation>
        <location evidence="2">Cytoplasm</location>
        <location evidence="2">Cytoskeleton</location>
    </subcellularLocation>
    <subcellularLocation>
        <location evidence="2">Nucleus</location>
    </subcellularLocation>
</comment>
<comment type="PTM">
    <text evidence="2">S-nitrosylation of Cys-150 leads to translocation to the nucleus.</text>
</comment>
<comment type="similarity">
    <text evidence="5">Belongs to the glyceraldehyde-3-phosphate dehydrogenase family.</text>
</comment>
<dbReference type="EC" id="1.2.1.12" evidence="1"/>
<dbReference type="EC" id="2.6.99.-" evidence="2"/>
<dbReference type="EMBL" id="K01458">
    <property type="protein sequence ID" value="AAA48778.1"/>
    <property type="molecule type" value="mRNA"/>
</dbReference>
<dbReference type="EMBL" id="V00407">
    <property type="protein sequence ID" value="CAA23698.1"/>
    <property type="molecule type" value="mRNA"/>
</dbReference>
<dbReference type="EMBL" id="M11213">
    <property type="protein sequence ID" value="AAA48774.1"/>
    <property type="molecule type" value="Genomic_DNA"/>
</dbReference>
<dbReference type="EMBL" id="AF047874">
    <property type="protein sequence ID" value="AAD02474.1"/>
    <property type="molecule type" value="mRNA"/>
</dbReference>
<dbReference type="EMBL" id="V00406">
    <property type="protein sequence ID" value="CAA23697.1"/>
    <property type="molecule type" value="mRNA"/>
</dbReference>
<dbReference type="EMBL" id="X01578">
    <property type="protein sequence ID" value="CAA25733.1"/>
    <property type="molecule type" value="mRNA"/>
</dbReference>
<dbReference type="PIR" id="A00368">
    <property type="entry name" value="DECHG3"/>
</dbReference>
<dbReference type="RefSeq" id="NP_989636.1">
    <property type="nucleotide sequence ID" value="NM_204305.2"/>
</dbReference>
<dbReference type="SMR" id="P00356"/>
<dbReference type="BioGRID" id="675216">
    <property type="interactions" value="2"/>
</dbReference>
<dbReference type="FunCoup" id="P00356">
    <property type="interactions" value="1553"/>
</dbReference>
<dbReference type="IntAct" id="P00356">
    <property type="interactions" value="1"/>
</dbReference>
<dbReference type="STRING" id="9031.ENSGALP00000063325"/>
<dbReference type="Allergome" id="12127">
    <property type="allergen name" value="Gal d GAPDH"/>
</dbReference>
<dbReference type="PaxDb" id="9031-ENSGALP00000023278"/>
<dbReference type="Ensembl" id="ENSGALT00010053590.1">
    <property type="protein sequence ID" value="ENSGALP00010032290.1"/>
    <property type="gene ID" value="ENSGALG00010022038.1"/>
</dbReference>
<dbReference type="GeneID" id="374193"/>
<dbReference type="KEGG" id="gga:374193"/>
<dbReference type="CTD" id="2597"/>
<dbReference type="VEuPathDB" id="HostDB:geneid_374193"/>
<dbReference type="eggNOG" id="KOG0657">
    <property type="taxonomic scope" value="Eukaryota"/>
</dbReference>
<dbReference type="GeneTree" id="ENSGT00940000153298"/>
<dbReference type="HOGENOM" id="CLU_030140_0_1_1"/>
<dbReference type="InParanoid" id="P00356"/>
<dbReference type="OMA" id="YGYTCNM"/>
<dbReference type="OrthoDB" id="1152826at2759"/>
<dbReference type="PhylomeDB" id="P00356"/>
<dbReference type="BRENDA" id="1.2.1.12">
    <property type="organism ID" value="1306"/>
</dbReference>
<dbReference type="Reactome" id="R-GGA-352875">
    <property type="pathway name" value="Gluconeogenesis"/>
</dbReference>
<dbReference type="Reactome" id="R-GGA-352882">
    <property type="pathway name" value="Glycolysis"/>
</dbReference>
<dbReference type="Reactome" id="R-GGA-70171">
    <property type="pathway name" value="Glycolysis"/>
</dbReference>
<dbReference type="Reactome" id="R-GGA-70263">
    <property type="pathway name" value="Gluconeogenesis"/>
</dbReference>
<dbReference type="UniPathway" id="UPA00109">
    <property type="reaction ID" value="UER00184"/>
</dbReference>
<dbReference type="PRO" id="PR:P00356"/>
<dbReference type="Proteomes" id="UP000000539">
    <property type="component" value="Chromosome 1"/>
</dbReference>
<dbReference type="Bgee" id="ENSGALG00000014442">
    <property type="expression patterns" value="Expressed in muscle tissue and 13 other cell types or tissues"/>
</dbReference>
<dbReference type="GO" id="GO:0005737">
    <property type="term" value="C:cytoplasm"/>
    <property type="evidence" value="ECO:0000250"/>
    <property type="project" value="UniProtKB"/>
</dbReference>
<dbReference type="GO" id="GO:0005829">
    <property type="term" value="C:cytosol"/>
    <property type="evidence" value="ECO:0000250"/>
    <property type="project" value="UniProtKB"/>
</dbReference>
<dbReference type="GO" id="GO:0097452">
    <property type="term" value="C:GAIT complex"/>
    <property type="evidence" value="ECO:0007669"/>
    <property type="project" value="Ensembl"/>
</dbReference>
<dbReference type="GO" id="GO:0005811">
    <property type="term" value="C:lipid droplet"/>
    <property type="evidence" value="ECO:0007669"/>
    <property type="project" value="Ensembl"/>
</dbReference>
<dbReference type="GO" id="GO:0016020">
    <property type="term" value="C:membrane"/>
    <property type="evidence" value="ECO:0000314"/>
    <property type="project" value="AgBase"/>
</dbReference>
<dbReference type="GO" id="GO:0015630">
    <property type="term" value="C:microtubule cytoskeleton"/>
    <property type="evidence" value="ECO:0000250"/>
    <property type="project" value="UniProtKB"/>
</dbReference>
<dbReference type="GO" id="GO:0031965">
    <property type="term" value="C:nuclear membrane"/>
    <property type="evidence" value="ECO:0007669"/>
    <property type="project" value="Ensembl"/>
</dbReference>
<dbReference type="GO" id="GO:0005634">
    <property type="term" value="C:nucleus"/>
    <property type="evidence" value="ECO:0000250"/>
    <property type="project" value="UniProtKB"/>
</dbReference>
<dbReference type="GO" id="GO:0005886">
    <property type="term" value="C:plasma membrane"/>
    <property type="evidence" value="ECO:0007669"/>
    <property type="project" value="Ensembl"/>
</dbReference>
<dbReference type="GO" id="GO:1990904">
    <property type="term" value="C:ribonucleoprotein complex"/>
    <property type="evidence" value="ECO:0007669"/>
    <property type="project" value="Ensembl"/>
</dbReference>
<dbReference type="GO" id="GO:0019828">
    <property type="term" value="F:aspartic-type endopeptidase inhibitor activity"/>
    <property type="evidence" value="ECO:0007669"/>
    <property type="project" value="Ensembl"/>
</dbReference>
<dbReference type="GO" id="GO:0097718">
    <property type="term" value="F:disordered domain specific binding"/>
    <property type="evidence" value="ECO:0007669"/>
    <property type="project" value="Ensembl"/>
</dbReference>
<dbReference type="GO" id="GO:0004365">
    <property type="term" value="F:glyceraldehyde-3-phosphate dehydrogenase (NAD+) (phosphorylating) activity"/>
    <property type="evidence" value="ECO:0000250"/>
    <property type="project" value="UniProtKB"/>
</dbReference>
<dbReference type="GO" id="GO:0042802">
    <property type="term" value="F:identical protein binding"/>
    <property type="evidence" value="ECO:0007669"/>
    <property type="project" value="Ensembl"/>
</dbReference>
<dbReference type="GO" id="GO:0008017">
    <property type="term" value="F:microtubule binding"/>
    <property type="evidence" value="ECO:0000250"/>
    <property type="project" value="UniProtKB"/>
</dbReference>
<dbReference type="GO" id="GO:0051287">
    <property type="term" value="F:NAD binding"/>
    <property type="evidence" value="ECO:0007669"/>
    <property type="project" value="InterPro"/>
</dbReference>
<dbReference type="GO" id="GO:0050661">
    <property type="term" value="F:NADP binding"/>
    <property type="evidence" value="ECO:0007669"/>
    <property type="project" value="InterPro"/>
</dbReference>
<dbReference type="GO" id="GO:0035605">
    <property type="term" value="F:peptidyl-cysteine S-nitrosylase activity"/>
    <property type="evidence" value="ECO:0000250"/>
    <property type="project" value="UniProtKB"/>
</dbReference>
<dbReference type="GO" id="GO:0061844">
    <property type="term" value="P:antimicrobial humoral immune response mediated by antimicrobial peptide"/>
    <property type="evidence" value="ECO:0007669"/>
    <property type="project" value="Ensembl"/>
</dbReference>
<dbReference type="GO" id="GO:0071346">
    <property type="term" value="P:cellular response to type II interferon"/>
    <property type="evidence" value="ECO:0007669"/>
    <property type="project" value="Ensembl"/>
</dbReference>
<dbReference type="GO" id="GO:0050832">
    <property type="term" value="P:defense response to fungus"/>
    <property type="evidence" value="ECO:0007669"/>
    <property type="project" value="Ensembl"/>
</dbReference>
<dbReference type="GO" id="GO:0006094">
    <property type="term" value="P:gluconeogenesis"/>
    <property type="evidence" value="ECO:0000303"/>
    <property type="project" value="AgBase"/>
</dbReference>
<dbReference type="GO" id="GO:0006096">
    <property type="term" value="P:glycolytic process"/>
    <property type="evidence" value="ECO:0000318"/>
    <property type="project" value="GO_Central"/>
</dbReference>
<dbReference type="GO" id="GO:0051873">
    <property type="term" value="P:killing by host of symbiont cells"/>
    <property type="evidence" value="ECO:0007669"/>
    <property type="project" value="Ensembl"/>
</dbReference>
<dbReference type="GO" id="GO:0000226">
    <property type="term" value="P:microtubule cytoskeleton organization"/>
    <property type="evidence" value="ECO:0000250"/>
    <property type="project" value="UniProtKB"/>
</dbReference>
<dbReference type="GO" id="GO:0043066">
    <property type="term" value="P:negative regulation of apoptotic process"/>
    <property type="evidence" value="ECO:0000315"/>
    <property type="project" value="AgBase"/>
</dbReference>
<dbReference type="GO" id="GO:0017148">
    <property type="term" value="P:negative regulation of translation"/>
    <property type="evidence" value="ECO:0007669"/>
    <property type="project" value="Ensembl"/>
</dbReference>
<dbReference type="GO" id="GO:0051402">
    <property type="term" value="P:neuron apoptotic process"/>
    <property type="evidence" value="ECO:0000250"/>
    <property type="project" value="UniProtKB"/>
</dbReference>
<dbReference type="GO" id="GO:0000740">
    <property type="term" value="P:nuclear membrane fusion"/>
    <property type="evidence" value="ECO:0000315"/>
    <property type="project" value="AgBase"/>
</dbReference>
<dbReference type="GO" id="GO:0035606">
    <property type="term" value="P:peptidyl-cysteine S-trans-nitrosylation"/>
    <property type="evidence" value="ECO:0000250"/>
    <property type="project" value="UniProtKB"/>
</dbReference>
<dbReference type="GO" id="GO:0043123">
    <property type="term" value="P:positive regulation of canonical NF-kappaB signal transduction"/>
    <property type="evidence" value="ECO:0000250"/>
    <property type="project" value="UniProtKB"/>
</dbReference>
<dbReference type="GO" id="GO:0032481">
    <property type="term" value="P:positive regulation of type I interferon production"/>
    <property type="evidence" value="ECO:0000250"/>
    <property type="project" value="UniProtKB"/>
</dbReference>
<dbReference type="GO" id="GO:0050821">
    <property type="term" value="P:protein stabilization"/>
    <property type="evidence" value="ECO:0000250"/>
    <property type="project" value="UniProtKB"/>
</dbReference>
<dbReference type="CDD" id="cd18126">
    <property type="entry name" value="GAPDH_I_C"/>
    <property type="match status" value="1"/>
</dbReference>
<dbReference type="CDD" id="cd05214">
    <property type="entry name" value="GAPDH_I_N"/>
    <property type="match status" value="1"/>
</dbReference>
<dbReference type="FunFam" id="3.30.360.10:FF:000001">
    <property type="entry name" value="Glyceraldehyde-3-phosphate dehydrogenase"/>
    <property type="match status" value="1"/>
</dbReference>
<dbReference type="FunFam" id="3.40.50.720:FF:001161">
    <property type="entry name" value="Glyceraldehyde-3-phosphate dehydrogenase"/>
    <property type="match status" value="1"/>
</dbReference>
<dbReference type="Gene3D" id="3.30.360.10">
    <property type="entry name" value="Dihydrodipicolinate Reductase, domain 2"/>
    <property type="match status" value="1"/>
</dbReference>
<dbReference type="Gene3D" id="3.40.50.720">
    <property type="entry name" value="NAD(P)-binding Rossmann-like Domain"/>
    <property type="match status" value="1"/>
</dbReference>
<dbReference type="InterPro" id="IPR020831">
    <property type="entry name" value="GlycerAld/Erythrose_P_DH"/>
</dbReference>
<dbReference type="InterPro" id="IPR020830">
    <property type="entry name" value="GlycerAld_3-P_DH_AS"/>
</dbReference>
<dbReference type="InterPro" id="IPR020829">
    <property type="entry name" value="GlycerAld_3-P_DH_cat"/>
</dbReference>
<dbReference type="InterPro" id="IPR020828">
    <property type="entry name" value="GlycerAld_3-P_DH_NAD(P)-bd"/>
</dbReference>
<dbReference type="InterPro" id="IPR006424">
    <property type="entry name" value="Glyceraldehyde-3-P_DH_1"/>
</dbReference>
<dbReference type="InterPro" id="IPR036291">
    <property type="entry name" value="NAD(P)-bd_dom_sf"/>
</dbReference>
<dbReference type="NCBIfam" id="TIGR01534">
    <property type="entry name" value="GAPDH-I"/>
    <property type="match status" value="1"/>
</dbReference>
<dbReference type="PANTHER" id="PTHR10836">
    <property type="entry name" value="GLYCERALDEHYDE 3-PHOSPHATE DEHYDROGENASE"/>
    <property type="match status" value="1"/>
</dbReference>
<dbReference type="PANTHER" id="PTHR10836:SF111">
    <property type="entry name" value="GLYCERALDEHYDE-3-PHOSPHATE DEHYDROGENASE"/>
    <property type="match status" value="1"/>
</dbReference>
<dbReference type="Pfam" id="PF02800">
    <property type="entry name" value="Gp_dh_C"/>
    <property type="match status" value="1"/>
</dbReference>
<dbReference type="Pfam" id="PF00044">
    <property type="entry name" value="Gp_dh_N"/>
    <property type="match status" value="1"/>
</dbReference>
<dbReference type="PIRSF" id="PIRSF000149">
    <property type="entry name" value="GAP_DH"/>
    <property type="match status" value="1"/>
</dbReference>
<dbReference type="PRINTS" id="PR00078">
    <property type="entry name" value="G3PDHDRGNASE"/>
</dbReference>
<dbReference type="SMART" id="SM00846">
    <property type="entry name" value="Gp_dh_N"/>
    <property type="match status" value="1"/>
</dbReference>
<dbReference type="SUPFAM" id="SSF55347">
    <property type="entry name" value="Glyceraldehyde-3-phosphate dehydrogenase-like, C-terminal domain"/>
    <property type="match status" value="1"/>
</dbReference>
<dbReference type="SUPFAM" id="SSF51735">
    <property type="entry name" value="NAD(P)-binding Rossmann-fold domains"/>
    <property type="match status" value="1"/>
</dbReference>
<dbReference type="PROSITE" id="PS00071">
    <property type="entry name" value="GAPDH"/>
    <property type="match status" value="1"/>
</dbReference>
<keyword id="KW-0053">Apoptosis</keyword>
<keyword id="KW-0963">Cytoplasm</keyword>
<keyword id="KW-0206">Cytoskeleton</keyword>
<keyword id="KW-0324">Glycolysis</keyword>
<keyword id="KW-0520">NAD</keyword>
<keyword id="KW-0539">Nucleus</keyword>
<keyword id="KW-0560">Oxidoreductase</keyword>
<keyword id="KW-1185">Reference proteome</keyword>
<keyword id="KW-0702">S-nitrosylation</keyword>
<keyword id="KW-0808">Transferase</keyword>
<organism>
    <name type="scientific">Gallus gallus</name>
    <name type="common">Chicken</name>
    <dbReference type="NCBI Taxonomy" id="9031"/>
    <lineage>
        <taxon>Eukaryota</taxon>
        <taxon>Metazoa</taxon>
        <taxon>Chordata</taxon>
        <taxon>Craniata</taxon>
        <taxon>Vertebrata</taxon>
        <taxon>Euteleostomi</taxon>
        <taxon>Archelosauria</taxon>
        <taxon>Archosauria</taxon>
        <taxon>Dinosauria</taxon>
        <taxon>Saurischia</taxon>
        <taxon>Theropoda</taxon>
        <taxon>Coelurosauria</taxon>
        <taxon>Aves</taxon>
        <taxon>Neognathae</taxon>
        <taxon>Galloanserae</taxon>
        <taxon>Galliformes</taxon>
        <taxon>Phasianidae</taxon>
        <taxon>Phasianinae</taxon>
        <taxon>Gallus</taxon>
    </lineage>
</organism>
<accession>P00356</accession>
<accession>Q90848</accession>
<accession>Q90849</accession>
<accession>Q98926</accession>
<evidence type="ECO:0000250" key="1">
    <source>
        <dbReference type="UniProtKB" id="P04406"/>
    </source>
</evidence>
<evidence type="ECO:0000250" key="2">
    <source>
        <dbReference type="UniProtKB" id="P04797"/>
    </source>
</evidence>
<evidence type="ECO:0000250" key="3">
    <source>
        <dbReference type="UniProtKB" id="P22513"/>
    </source>
</evidence>
<evidence type="ECO:0000255" key="4">
    <source>
        <dbReference type="PROSITE-ProRule" id="PRU10009"/>
    </source>
</evidence>
<evidence type="ECO:0000305" key="5"/>
<gene>
    <name type="primary">GAPDH</name>
    <name type="synonym">GAPD</name>
</gene>
<name>G3P_CHICK</name>
<feature type="chain" id="PRO_0000145496" description="Glyceraldehyde-3-phosphate dehydrogenase">
    <location>
        <begin position="1"/>
        <end position="333"/>
    </location>
</feature>
<feature type="active site" description="Nucleophile" evidence="4">
    <location>
        <position position="150"/>
    </location>
</feature>
<feature type="binding site" evidence="1">
    <location>
        <begin position="11"/>
        <end position="12"/>
    </location>
    <ligand>
        <name>NAD(+)</name>
        <dbReference type="ChEBI" id="CHEBI:57540"/>
    </ligand>
</feature>
<feature type="binding site" evidence="1">
    <location>
        <position position="33"/>
    </location>
    <ligand>
        <name>NAD(+)</name>
        <dbReference type="ChEBI" id="CHEBI:57540"/>
    </ligand>
</feature>
<feature type="binding site" evidence="1">
    <location>
        <position position="78"/>
    </location>
    <ligand>
        <name>NAD(+)</name>
        <dbReference type="ChEBI" id="CHEBI:57540"/>
    </ligand>
</feature>
<feature type="binding site" evidence="1">
    <location>
        <position position="120"/>
    </location>
    <ligand>
        <name>NAD(+)</name>
        <dbReference type="ChEBI" id="CHEBI:57540"/>
    </ligand>
</feature>
<feature type="binding site" evidence="3">
    <location>
        <begin position="149"/>
        <end position="151"/>
    </location>
    <ligand>
        <name>D-glyceraldehyde 3-phosphate</name>
        <dbReference type="ChEBI" id="CHEBI:59776"/>
    </ligand>
</feature>
<feature type="binding site" evidence="3">
    <location>
        <position position="180"/>
    </location>
    <ligand>
        <name>D-glyceraldehyde 3-phosphate</name>
        <dbReference type="ChEBI" id="CHEBI:59776"/>
    </ligand>
</feature>
<feature type="binding site" evidence="3">
    <location>
        <begin position="209"/>
        <end position="210"/>
    </location>
    <ligand>
        <name>D-glyceraldehyde 3-phosphate</name>
        <dbReference type="ChEBI" id="CHEBI:59776"/>
    </ligand>
</feature>
<feature type="binding site" evidence="3">
    <location>
        <position position="232"/>
    </location>
    <ligand>
        <name>D-glyceraldehyde 3-phosphate</name>
        <dbReference type="ChEBI" id="CHEBI:59776"/>
    </ligand>
</feature>
<feature type="binding site" evidence="1">
    <location>
        <position position="314"/>
    </location>
    <ligand>
        <name>NAD(+)</name>
        <dbReference type="ChEBI" id="CHEBI:57540"/>
    </ligand>
</feature>
<feature type="site" description="Activates thiol group during catalysis" evidence="1">
    <location>
        <position position="177"/>
    </location>
</feature>
<feature type="modified residue" description="S-nitrosocysteine" evidence="2">
    <location>
        <position position="150"/>
    </location>
</feature>
<feature type="sequence conflict" description="In Ref. 7; CAA25733." evidence="5" ref="7">
    <original>V</original>
    <variation>RSE</variation>
    <location>
        <position position="2"/>
    </location>
</feature>
<feature type="sequence conflict" description="In Ref. 7; CAA25733." evidence="5" ref="7">
    <original>V</original>
    <variation>L</variation>
    <location>
        <position position="145"/>
    </location>
</feature>
<feature type="sequence conflict" description="In Ref. 1; AAA48778, 2; CAA23698 and 3; AAA48774." evidence="5" ref="1 2 3">
    <original>G</original>
    <variation>D</variation>
    <location>
        <position position="197"/>
    </location>
</feature>
<feature type="sequence conflict" description="In Ref. 5; CAA23697." evidence="5" ref="5">
    <original>D</original>
    <variation>E</variation>
    <location>
        <position position="277"/>
    </location>
</feature>
<feature type="sequence conflict" description="In Ref. 3; AAA48774." evidence="5" ref="3">
    <original>D</original>
    <variation>H</variation>
    <location>
        <position position="294"/>
    </location>
</feature>
<feature type="sequence conflict" description="In Ref. 5; CAA23697." evidence="5" ref="5">
    <original>M</original>
    <variation>T</variation>
    <location>
        <position position="329"/>
    </location>
</feature>
<sequence>MVKVGVNGFGRIGRLVTRAAVLSGKVQVVAINDPFIDLNYMVYMFKYDSTHGHFKGTVKAENGKLVINGHAITIFQERDPSNIKWADAGAEYVVESTGVFTTMEKAGAHLKGGAKRVIISAPSADAPMFVMGVNHEKYDKSLKIVSNASCTTNCLAPLAKVIHDNFGIVEGLMTTVHAITATQKTVDGPSGKLWRDGRGAAQNIIPASTGAAKAVGKVIPELNGKLTGMAFRVPTPNVSVVDLTCRLEKPAKYDDIKRVVKAAADGPLKGILGYTEDQVVSCDFNGDSHSSTFDAGAGIALNDHFVKLVSWYDNEFGYSNRVVDLMVHMASKE</sequence>
<proteinExistence type="evidence at transcript level"/>
<reference key="1">
    <citation type="journal article" date="1984" name="Biochem. Biophys. Res. Commun.">
        <title>Complete nucleotide sequence of the messenger RNA coding for chicken muscle glyceraldehyde-3-phosphate dehydrogenase.</title>
        <authorList>
            <person name="Panabieres F."/>
            <person name="Piechaczyk M."/>
            <person name="Rainer B."/>
            <person name="Dani C."/>
            <person name="Fort P."/>
            <person name="Riaad S."/>
            <person name="Marty L."/>
            <person name="Imbach J.L."/>
            <person name="Jeanteur P."/>
            <person name="Blanchard J.-M."/>
        </authorList>
    </citation>
    <scope>NUCLEOTIDE SEQUENCE [MRNA]</scope>
</reference>
<reference key="2">
    <citation type="journal article" date="1983" name="Biochemistry">
        <title>Cloning and sequencing of a deoxyribonucleic acid copy of glyceraldehyde-3-phosphate dehydrogenase messenger ribonucleic acid isolated from chicken muscle.</title>
        <authorList>
            <person name="Dugaiczyk A."/>
            <person name="Haron J.A."/>
            <person name="Stone E.M."/>
            <person name="Dennison O.E."/>
            <person name="Rothblum K.N."/>
            <person name="Schwartz R.J."/>
        </authorList>
    </citation>
    <scope>NUCLEOTIDE SEQUENCE [MRNA]</scope>
</reference>
<reference key="3">
    <citation type="journal article" date="1985" name="Proc. Natl. Acad. Sci. U.S.A.">
        <title>Complete sequence of the chicken glyceraldehyde-3-phosphate dehydrogenase gene.</title>
        <authorList>
            <person name="Stone E.M."/>
            <person name="Rothblum K.N."/>
            <person name="Alevy M.C."/>
            <person name="Kuo T.M."/>
            <person name="Schwartz R.J."/>
        </authorList>
    </citation>
    <scope>NUCLEOTIDE SEQUENCE [GENOMIC DNA]</scope>
</reference>
<reference key="4">
    <citation type="journal article" date="1998" name="J. Cell. Biochem.">
        <title>Several novel transcripts of glyceraldehyde-3-phosphate dehydrogenase expressed in adult chicken testis.</title>
        <authorList>
            <person name="Mezquita J."/>
            <person name="Pau M."/>
            <person name="Mezquita C."/>
        </authorList>
    </citation>
    <scope>NUCLEOTIDE SEQUENCE [MRNA]</scope>
    <source>
        <strain>Hubbard White Mountain</strain>
        <tissue>Testis</tissue>
    </source>
</reference>
<reference key="5">
    <citation type="journal article" date="1982" name="J. Biol. Chem.">
        <title>Cloning, partial sequencing, and expression of glyceraldehyde-3-phosphate dehydrogenase gene in chick embryonic heart muscle cells.</title>
        <authorList>
            <person name="Arnold H.H."/>
            <person name="Domdey H."/>
            <person name="Wiebauer K."/>
            <person name="Datta K."/>
            <person name="Siddiqui M.A.Q."/>
        </authorList>
    </citation>
    <scope>NUCLEOTIDE SEQUENCE [MRNA] OF 197-333</scope>
    <source>
        <tissue>Heart</tissue>
    </source>
</reference>
<reference key="6">
    <citation type="journal article" date="1983" name="J. Biol. Chem.">
        <authorList>
            <person name="Arnold H.H."/>
            <person name="Domdey H."/>
            <person name="Wiebauer K."/>
            <person name="Datta K."/>
            <person name="Siddiqui M.A.Q."/>
        </authorList>
    </citation>
    <scope>ERRATUM OF PUBMED:6179937</scope>
    <scope>SEQUENCE REVISION TO 329</scope>
</reference>
<reference key="7">
    <citation type="journal article" date="1983" name="Nucleic Acids Res.">
        <title>Glyceraldehyde 3-phosphate dehydrogenase protein and mRNA are both differentially expressed in adult chickens but not chick embryos.</title>
        <authorList>
            <person name="Milner R.J."/>
            <person name="Brow M.A.D."/>
            <person name="Cleveland D.W."/>
            <person name="Shinnick T.M."/>
            <person name="Sutcliff J.G."/>
        </authorList>
    </citation>
    <scope>NUCLEOTIDE SEQUENCE [MRNA] OF 2-225</scope>
    <source>
        <tissue>Brain</tissue>
    </source>
</reference>
<protein>
    <recommendedName>
        <fullName>Glyceraldehyde-3-phosphate dehydrogenase</fullName>
        <shortName>GAPDH</shortName>
        <ecNumber evidence="1">1.2.1.12</ecNumber>
    </recommendedName>
    <alternativeName>
        <fullName evidence="5">Peptidyl-cysteine S-nitrosylase GAPDH</fullName>
        <ecNumber evidence="2">2.6.99.-</ecNumber>
    </alternativeName>
</protein>